<sequence length="69" mass="8579">MVTVTVDKNENLEKALKRFKRMIEKEAIIREWKRREYYEKPSTIRVKKEKAFKRKQAKKVRKLKQKTNR</sequence>
<organism>
    <name type="scientific">Borrelia garinii subsp. bavariensis (strain ATCC BAA-2496 / DSM 23469 / PBi)</name>
    <name type="common">Borreliella bavariensis</name>
    <dbReference type="NCBI Taxonomy" id="290434"/>
    <lineage>
        <taxon>Bacteria</taxon>
        <taxon>Pseudomonadati</taxon>
        <taxon>Spirochaetota</taxon>
        <taxon>Spirochaetia</taxon>
        <taxon>Spirochaetales</taxon>
        <taxon>Borreliaceae</taxon>
        <taxon>Borreliella</taxon>
    </lineage>
</organism>
<gene>
    <name evidence="1" type="primary">rpsU</name>
    <name type="ordered locus">BG0259</name>
</gene>
<dbReference type="EMBL" id="CP000013">
    <property type="protein sequence ID" value="AAU07112.1"/>
    <property type="molecule type" value="Genomic_DNA"/>
</dbReference>
<dbReference type="RefSeq" id="WP_002656880.1">
    <property type="nucleotide sequence ID" value="NZ_CP028872.1"/>
</dbReference>
<dbReference type="SMR" id="Q662A9"/>
<dbReference type="GeneID" id="83865728"/>
<dbReference type="KEGG" id="bga:BG0259"/>
<dbReference type="eggNOG" id="COG0828">
    <property type="taxonomic scope" value="Bacteria"/>
</dbReference>
<dbReference type="HOGENOM" id="CLU_159258_1_2_12"/>
<dbReference type="OrthoDB" id="9799244at2"/>
<dbReference type="Proteomes" id="UP000002276">
    <property type="component" value="Chromosome"/>
</dbReference>
<dbReference type="GO" id="GO:1990904">
    <property type="term" value="C:ribonucleoprotein complex"/>
    <property type="evidence" value="ECO:0007669"/>
    <property type="project" value="UniProtKB-KW"/>
</dbReference>
<dbReference type="GO" id="GO:0005840">
    <property type="term" value="C:ribosome"/>
    <property type="evidence" value="ECO:0007669"/>
    <property type="project" value="UniProtKB-KW"/>
</dbReference>
<dbReference type="GO" id="GO:0003735">
    <property type="term" value="F:structural constituent of ribosome"/>
    <property type="evidence" value="ECO:0007669"/>
    <property type="project" value="InterPro"/>
</dbReference>
<dbReference type="GO" id="GO:0006412">
    <property type="term" value="P:translation"/>
    <property type="evidence" value="ECO:0007669"/>
    <property type="project" value="UniProtKB-UniRule"/>
</dbReference>
<dbReference type="Gene3D" id="1.20.5.1150">
    <property type="entry name" value="Ribosomal protein S8"/>
    <property type="match status" value="1"/>
</dbReference>
<dbReference type="HAMAP" id="MF_00358">
    <property type="entry name" value="Ribosomal_bS21"/>
    <property type="match status" value="1"/>
</dbReference>
<dbReference type="InterPro" id="IPR001911">
    <property type="entry name" value="Ribosomal_bS21"/>
</dbReference>
<dbReference type="InterPro" id="IPR018278">
    <property type="entry name" value="Ribosomal_bS21_CS"/>
</dbReference>
<dbReference type="InterPro" id="IPR038380">
    <property type="entry name" value="Ribosomal_bS21_sf"/>
</dbReference>
<dbReference type="NCBIfam" id="TIGR00030">
    <property type="entry name" value="S21p"/>
    <property type="match status" value="1"/>
</dbReference>
<dbReference type="PANTHER" id="PTHR21109">
    <property type="entry name" value="MITOCHONDRIAL 28S RIBOSOMAL PROTEIN S21"/>
    <property type="match status" value="1"/>
</dbReference>
<dbReference type="PANTHER" id="PTHR21109:SF22">
    <property type="entry name" value="SMALL RIBOSOMAL SUBUNIT PROTEIN BS21"/>
    <property type="match status" value="1"/>
</dbReference>
<dbReference type="Pfam" id="PF01165">
    <property type="entry name" value="Ribosomal_S21"/>
    <property type="match status" value="1"/>
</dbReference>
<dbReference type="PRINTS" id="PR00976">
    <property type="entry name" value="RIBOSOMALS21"/>
</dbReference>
<dbReference type="PROSITE" id="PS01181">
    <property type="entry name" value="RIBOSOMAL_S21"/>
    <property type="match status" value="1"/>
</dbReference>
<name>RS21_BORGP</name>
<accession>Q662A9</accession>
<reference key="1">
    <citation type="journal article" date="2004" name="Nucleic Acids Res.">
        <title>Comparative analysis of the Borrelia garinii genome.</title>
        <authorList>
            <person name="Gloeckner G."/>
            <person name="Lehmann R."/>
            <person name="Romualdi A."/>
            <person name="Pradella S."/>
            <person name="Schulte-Spechtel U."/>
            <person name="Schilhabel M."/>
            <person name="Wilske B."/>
            <person name="Suehnel J."/>
            <person name="Platzer M."/>
        </authorList>
    </citation>
    <scope>NUCLEOTIDE SEQUENCE [LARGE SCALE GENOMIC DNA]</scope>
    <source>
        <strain>ATCC BAA-2496 / DSM 23469 / PBi</strain>
    </source>
</reference>
<evidence type="ECO:0000255" key="1">
    <source>
        <dbReference type="HAMAP-Rule" id="MF_00358"/>
    </source>
</evidence>
<evidence type="ECO:0000256" key="2">
    <source>
        <dbReference type="SAM" id="MobiDB-lite"/>
    </source>
</evidence>
<evidence type="ECO:0000305" key="3"/>
<comment type="similarity">
    <text evidence="1">Belongs to the bacterial ribosomal protein bS21 family.</text>
</comment>
<feature type="chain" id="PRO_0000178307" description="Small ribosomal subunit protein bS21">
    <location>
        <begin position="1"/>
        <end position="69"/>
    </location>
</feature>
<feature type="region of interest" description="Disordered" evidence="2">
    <location>
        <begin position="50"/>
        <end position="69"/>
    </location>
</feature>
<keyword id="KW-0687">Ribonucleoprotein</keyword>
<keyword id="KW-0689">Ribosomal protein</keyword>
<protein>
    <recommendedName>
        <fullName evidence="1">Small ribosomal subunit protein bS21</fullName>
    </recommendedName>
    <alternativeName>
        <fullName evidence="3">30S ribosomal protein S21</fullName>
    </alternativeName>
</protein>
<proteinExistence type="inferred from homology"/>